<organism>
    <name type="scientific">Capra hircus</name>
    <name type="common">Goat</name>
    <dbReference type="NCBI Taxonomy" id="9925"/>
    <lineage>
        <taxon>Eukaryota</taxon>
        <taxon>Metazoa</taxon>
        <taxon>Chordata</taxon>
        <taxon>Craniata</taxon>
        <taxon>Vertebrata</taxon>
        <taxon>Euteleostomi</taxon>
        <taxon>Mammalia</taxon>
        <taxon>Eutheria</taxon>
        <taxon>Laurasiatheria</taxon>
        <taxon>Artiodactyla</taxon>
        <taxon>Ruminantia</taxon>
        <taxon>Pecora</taxon>
        <taxon>Bovidae</taxon>
        <taxon>Caprinae</taxon>
        <taxon>Capra</taxon>
    </lineage>
</organism>
<evidence type="ECO:0000250" key="1"/>
<evidence type="ECO:0000250" key="2">
    <source>
        <dbReference type="UniProtKB" id="P02788"/>
    </source>
</evidence>
<evidence type="ECO:0000255" key="3"/>
<evidence type="ECO:0000255" key="4">
    <source>
        <dbReference type="PROSITE-ProRule" id="PRU00741"/>
    </source>
</evidence>
<evidence type="ECO:0000269" key="5">
    <source>
    </source>
</evidence>
<evidence type="ECO:0000269" key="6">
    <source>
    </source>
</evidence>
<evidence type="ECO:0000269" key="7">
    <source>
    </source>
</evidence>
<evidence type="ECO:0000305" key="8"/>
<comment type="function">
    <text evidence="2">Transferrins are iron binding transport proteins which can bind two Fe(3+) ions in association with the binding of an anion, usually bicarbonate.</text>
</comment>
<comment type="function">
    <molecule>Lactotransferrin</molecule>
    <text evidence="2">Major iron-binding and multifunctional protein found in exocrine fluids such as breast milk and mucosal secretions. Has antimicrobial activity, which depends on the extracellular cation concentration. Antimicrobial properties include bacteriostasis, which is related to its ability to sequester free iron and thus inhibit microbial growth, as well as direct bactericidal properties leading to the release of lipopolysaccharides from the bacterial outer membrane. Can also prevent bacterial biofilm development in P.aeruginosa infection. Has weak antifungal activity against C.albicans. Has anabolic, differentiating and anti-apoptotic effects on osteoblasts and can also inhibit osteoclastogenesis, possibly playing a role in the regulation of bone growth. Promotes binding of species C adenoviruses to epithelial cells, promoting adenovirus infection. Can inhibit papillomavirus infections. Stimulates the TLR4 signaling pathway leading to NF-kappa-B activation and subsequent pro-inflammatory cytokine production while also interfering with the lipopolysaccharide (LPS)-stimulated TLR4 signaling. Inhibits neutrophil granulocyte migration to sites of apoptosis, when secreted by apoptotic cells. Stimulates VEGFA-mediated endothelial cell migration and proliferation. Binds heparin, chondroitin sulfate and possibly other glycosaminoglycans (GAGs). Also binds specifically to pneumococcal surface protein A (PspA), the lipid A portion of bacterial lipopolysaccharide (LPS), lysozyme and DNA.</text>
</comment>
<comment type="function">
    <text evidence="2">Lactoferricin binds to the bacterial surface and is crucial for the bactericidal functions. Has some antiviral activity against papillomavirus infection. N-terminal region shows strong antifungal activity against C.albicans. Contains two BBXB heparin-binding consensus sequences that appear to form the predominate functional GAG-binding site.</text>
</comment>
<comment type="function">
    <text evidence="2">The lactotransferrin transferrin-like domain 1 functions as a serine protease of the peptidase S60 family that cuts arginine rich regions. This function contributes to the antimicrobial activity. Shows a preferential cleavage at -Arg-Ser-Arg-Arg-|- and -Arg-Arg-Ser-Arg-|-, and of Z-Phe-Arg-|-aminomethylcoumarin sites.</text>
</comment>
<comment type="subunit">
    <text evidence="2">Monomer. Found in a complex with LTF, CLU, EPPIN and SEMG1. Found in a complex with MPO and LTF; interacts directly with CP, allows Fe(3+) incorporation into LTF and activation of CP ferroxidase activity.</text>
</comment>
<comment type="subcellular location">
    <subcellularLocation>
        <location>Secreted</location>
    </subcellularLocation>
    <subcellularLocation>
        <location evidence="1">Cytoplasmic granule</location>
    </subcellularLocation>
    <text evidence="1">Secreted into most exocrine fluids by various endothelial cells. Stored in the secondary granules of neutrophils (By similarity).</text>
</comment>
<comment type="developmental stage">
    <text evidence="7">Expressed in mammary glands at various stages of development, with weak expression detected in virgin goats and during pregnancy and lactation and high expression detected at the stage of involution.</text>
</comment>
<comment type="PTM">
    <text evidence="2">Poly-N-acetyllactosaminic carbohydrate moiety seems to be needed for TLR4 activation.</text>
</comment>
<comment type="similarity">
    <text evidence="4">Belongs to the transferrin family.</text>
</comment>
<reference key="1">
    <citation type="journal article" date="1994" name="Biochem. Biophys. Res. Commun.">
        <title>Characterization of the goat lactoferrin cDNA. Assignment of the relevant locus to bovine U12 synteny group.</title>
        <authorList>
            <person name="le Provost F."/>
            <person name="Nocart M."/>
            <person name="Guerin G."/>
            <person name="Martin P."/>
        </authorList>
    </citation>
    <scope>NUCLEOTIDE SEQUENCE [MRNA]</scope>
    <source>
        <tissue>Mammary gland</tissue>
    </source>
</reference>
<reference key="2">
    <citation type="journal article" date="1997" name="Anim. Genet.">
        <title>Polymorphic sequence of Korean Native goat lactoferrin exhibiting greater antibacterial activity.</title>
        <authorList>
            <person name="Lee T.H."/>
            <person name="Shimazaki K."/>
            <person name="Yu S.L."/>
            <person name="Nam M.S."/>
            <person name="Kim S.J."/>
            <person name="Lee K.K."/>
            <person name="Yu D.Y."/>
        </authorList>
    </citation>
    <scope>NUCLEOTIDE SEQUENCE [MRNA]</scope>
    <scope>ANTIBACTERIAL ACTIVITY</scope>
    <scope>DEVELOPMENTAL STAGE</scope>
    <source>
        <strain>Korean Native</strain>
        <tissue>Mammary gland</tissue>
    </source>
</reference>
<reference key="3">
    <citation type="journal article" date="2022" name="Food Chem.">
        <title>N-Glycoprofiling of immunoglobulin G and lactoferrin with site-specificity from goat milk using RP-UHPLC MS/MS.</title>
        <authorList>
            <person name="Gnanesh Kumar B.S."/>
            <person name="Lijina P."/>
            <person name="Jinesh P."/>
            <person name="Anagha S.M."/>
        </authorList>
    </citation>
    <scope>GLYCOSYLATION AT ASN-252; ASN-387; ASN-495 AND ASN-564</scope>
</reference>
<reference key="4">
    <citation type="journal article" date="2002" name="Indian J. Biochem. Biophys.">
        <title>Crystallization and structure determination of goat lactoferrin at 4.0A resolution: A new form of packing in lactoferrins with a high solvent content in crystals.</title>
        <authorList>
            <person name="Kumar P."/>
            <person name="Yadav S."/>
            <person name="Singh T.P."/>
        </authorList>
    </citation>
    <scope>X-RAY CRYSTALLOGRAPHY (4.00 ANGSTROMS) OF 20-708 IN COMPLEX WITH IRON</scope>
</reference>
<sequence length="708" mass="77358">MKLFVPALLSLGALGLCLAAPRKNVRWCAISLPEWSKCYQWQRRMRKLGAPSITCIRRTSALECIRAIAGKNADAVTLDSGMVFEAGLDPYKLRPVAAEIYGTEKSPQTHYYAVAVVKKGSNFQLDQLQGQKSCHMGLGRSAGWNIPVGILRPFLSWTESAEPLQGAVARFFSASCVPCVDGKAYPNLCQLCKGVGENKCACSSQEPYFGYSGAFKCLQDGAGDVAFVKETTVFENLPEKADRDQYELLCLNNTRAPVDAFKECHLAQVPSHAVVARSVDGKENLIWELLRKAQEKFGKNKSQSFQLFGSPEGRRDLLFKDSALGFVRIPSKVDSALYLGSRYLTALKNLRETAEELKARCTRVVWCAVGPEEQSKCQQWSEQSGQNVTCATASTTDDCIALVLKGEADALSLDGGYIYTAGKCGLVPVMAENRKSSKYSSLDCVLRPTEGYLAVAVVKKANEGLTWNSLKGKKSCHTAVDRTAGWNIPMGLIANQTGSCAFDEFFSQSCAPGADPKSSLCALCAGDDQGLDKCVPNSKEKYYGYTGAFRCLAEDVGDVAFVKNDTVWENTNGESSADWAKNLNREDFRLLCLDGTTKPVTEAQSCYLAVAPNHAVVSRSDRAAHVEQVLLHQQALFGKNGKNCPDQFCLFKSETKNLLFNDNTECLAKLGGRPTYEKYLGTEYVTAIANLKKCSTSPLLEACAFLTR</sequence>
<protein>
    <recommendedName>
        <fullName>Lactotransferrin</fullName>
        <shortName>Lactoferrin</shortName>
        <ecNumber>3.4.21.-</ecNumber>
    </recommendedName>
</protein>
<keyword id="KW-0002">3D-structure</keyword>
<keyword id="KW-1015">Disulfide bond</keyword>
<keyword id="KW-0325">Glycoprotein</keyword>
<keyword id="KW-0378">Hydrolase</keyword>
<keyword id="KW-0391">Immunity</keyword>
<keyword id="KW-0406">Ion transport</keyword>
<keyword id="KW-0408">Iron</keyword>
<keyword id="KW-0410">Iron transport</keyword>
<keyword id="KW-0479">Metal-binding</keyword>
<keyword id="KW-0892">Osteogenesis</keyword>
<keyword id="KW-0645">Protease</keyword>
<keyword id="KW-1185">Reference proteome</keyword>
<keyword id="KW-0677">Repeat</keyword>
<keyword id="KW-0964">Secreted</keyword>
<keyword id="KW-0720">Serine protease</keyword>
<keyword id="KW-0732">Signal</keyword>
<keyword id="KW-0813">Transport</keyword>
<accession>Q29477</accession>
<accession>Q29479</accession>
<dbReference type="EC" id="3.4.21.-"/>
<dbReference type="EMBL" id="X78902">
    <property type="protein sequence ID" value="CAA55517.1"/>
    <property type="molecule type" value="mRNA"/>
</dbReference>
<dbReference type="EMBL" id="U53857">
    <property type="protein sequence ID" value="AAA97958.1"/>
    <property type="molecule type" value="mRNA"/>
</dbReference>
<dbReference type="PIR" id="JC2323">
    <property type="entry name" value="JC2323"/>
</dbReference>
<dbReference type="RefSeq" id="NP_001272477.1">
    <property type="nucleotide sequence ID" value="NM_001285548.1"/>
</dbReference>
<dbReference type="PDB" id="1JW1">
    <property type="method" value="X-ray"/>
    <property type="resolution" value="4.00 A"/>
    <property type="chains" value="A=20-708"/>
</dbReference>
<dbReference type="PDBsum" id="1JW1"/>
<dbReference type="SMR" id="Q29477"/>
<dbReference type="STRING" id="9925.ENSCHIP00000016996"/>
<dbReference type="MEROPS" id="S60.001"/>
<dbReference type="GlyCosmos" id="Q29477">
    <property type="glycosylation" value="5 sites, No reported glycans"/>
</dbReference>
<dbReference type="iPTMnet" id="Q29477"/>
<dbReference type="GeneID" id="100861194"/>
<dbReference type="KEGG" id="chx:100861194"/>
<dbReference type="CTD" id="4057"/>
<dbReference type="OrthoDB" id="5914301at2759"/>
<dbReference type="EvolutionaryTrace" id="Q29477"/>
<dbReference type="Proteomes" id="UP000291000">
    <property type="component" value="Unassembled WGS sequence"/>
</dbReference>
<dbReference type="Proteomes" id="UP000694566">
    <property type="component" value="Unplaced"/>
</dbReference>
<dbReference type="GO" id="GO:0005769">
    <property type="term" value="C:early endosome"/>
    <property type="evidence" value="ECO:0007669"/>
    <property type="project" value="TreeGrafter"/>
</dbReference>
<dbReference type="GO" id="GO:0005615">
    <property type="term" value="C:extracellular space"/>
    <property type="evidence" value="ECO:0007669"/>
    <property type="project" value="InterPro"/>
</dbReference>
<dbReference type="GO" id="GO:0005886">
    <property type="term" value="C:plasma membrane"/>
    <property type="evidence" value="ECO:0007669"/>
    <property type="project" value="TreeGrafter"/>
</dbReference>
<dbReference type="GO" id="GO:0055037">
    <property type="term" value="C:recycling endosome"/>
    <property type="evidence" value="ECO:0007669"/>
    <property type="project" value="TreeGrafter"/>
</dbReference>
<dbReference type="GO" id="GO:0042581">
    <property type="term" value="C:specific granule"/>
    <property type="evidence" value="ECO:0000250"/>
    <property type="project" value="UniProtKB"/>
</dbReference>
<dbReference type="GO" id="GO:0046872">
    <property type="term" value="F:metal ion binding"/>
    <property type="evidence" value="ECO:0007669"/>
    <property type="project" value="UniProtKB-KW"/>
</dbReference>
<dbReference type="GO" id="GO:0008236">
    <property type="term" value="F:serine-type peptidase activity"/>
    <property type="evidence" value="ECO:0007669"/>
    <property type="project" value="UniProtKB-KW"/>
</dbReference>
<dbReference type="GO" id="GO:0019731">
    <property type="term" value="P:antibacterial humoral response"/>
    <property type="evidence" value="ECO:0000250"/>
    <property type="project" value="UniProtKB"/>
</dbReference>
<dbReference type="GO" id="GO:0019732">
    <property type="term" value="P:antifungal humoral response"/>
    <property type="evidence" value="ECO:0000250"/>
    <property type="project" value="UniProtKB"/>
</dbReference>
<dbReference type="GO" id="GO:0060349">
    <property type="term" value="P:bone morphogenesis"/>
    <property type="evidence" value="ECO:0000250"/>
    <property type="project" value="UniProtKB"/>
</dbReference>
<dbReference type="GO" id="GO:0002227">
    <property type="term" value="P:innate immune response in mucosa"/>
    <property type="evidence" value="ECO:0000250"/>
    <property type="project" value="UniProtKB"/>
</dbReference>
<dbReference type="GO" id="GO:0006826">
    <property type="term" value="P:iron ion transport"/>
    <property type="evidence" value="ECO:0007669"/>
    <property type="project" value="UniProtKB-KW"/>
</dbReference>
<dbReference type="GO" id="GO:0043066">
    <property type="term" value="P:negative regulation of apoptotic process"/>
    <property type="evidence" value="ECO:0000250"/>
    <property type="project" value="UniProtKB"/>
</dbReference>
<dbReference type="GO" id="GO:0031665">
    <property type="term" value="P:negative regulation of lipopolysaccharide-mediated signaling pathway"/>
    <property type="evidence" value="ECO:0000250"/>
    <property type="project" value="UniProtKB"/>
</dbReference>
<dbReference type="GO" id="GO:2001205">
    <property type="term" value="P:negative regulation of osteoclast development"/>
    <property type="evidence" value="ECO:0000250"/>
    <property type="project" value="UniProtKB"/>
</dbReference>
<dbReference type="GO" id="GO:1900229">
    <property type="term" value="P:negative regulation of single-species biofilm formation in or on host organism"/>
    <property type="evidence" value="ECO:0000250"/>
    <property type="project" value="UniProtKB"/>
</dbReference>
<dbReference type="GO" id="GO:2000308">
    <property type="term" value="P:negative regulation of tumor necrosis factor (ligand) superfamily member 11 production"/>
    <property type="evidence" value="ECO:0000250"/>
    <property type="project" value="UniProtKB"/>
</dbReference>
<dbReference type="GO" id="GO:0001503">
    <property type="term" value="P:ossification"/>
    <property type="evidence" value="ECO:0007669"/>
    <property type="project" value="UniProtKB-KW"/>
</dbReference>
<dbReference type="GO" id="GO:1900159">
    <property type="term" value="P:positive regulation of bone mineralization involved in bone maturation"/>
    <property type="evidence" value="ECO:0000250"/>
    <property type="project" value="UniProtKB"/>
</dbReference>
<dbReference type="GO" id="GO:1902732">
    <property type="term" value="P:positive regulation of chondrocyte proliferation"/>
    <property type="evidence" value="ECO:0000250"/>
    <property type="project" value="UniProtKB"/>
</dbReference>
<dbReference type="GO" id="GO:0045669">
    <property type="term" value="P:positive regulation of osteoblast differentiation"/>
    <property type="evidence" value="ECO:0000250"/>
    <property type="project" value="UniProtKB"/>
</dbReference>
<dbReference type="GO" id="GO:0033690">
    <property type="term" value="P:positive regulation of osteoblast proliferation"/>
    <property type="evidence" value="ECO:0000250"/>
    <property type="project" value="UniProtKB"/>
</dbReference>
<dbReference type="GO" id="GO:0006508">
    <property type="term" value="P:proteolysis"/>
    <property type="evidence" value="ECO:0007669"/>
    <property type="project" value="UniProtKB-KW"/>
</dbReference>
<dbReference type="GO" id="GO:0001817">
    <property type="term" value="P:regulation of cytokine production"/>
    <property type="evidence" value="ECO:0000250"/>
    <property type="project" value="UniProtKB"/>
</dbReference>
<dbReference type="GO" id="GO:0032680">
    <property type="term" value="P:regulation of tumor necrosis factor production"/>
    <property type="evidence" value="ECO:0000250"/>
    <property type="project" value="UniProtKB"/>
</dbReference>
<dbReference type="CDD" id="cd13617">
    <property type="entry name" value="PBP2_transferrin_C"/>
    <property type="match status" value="1"/>
</dbReference>
<dbReference type="CDD" id="cd13618">
    <property type="entry name" value="PBP2_transferrin_N"/>
    <property type="match status" value="1"/>
</dbReference>
<dbReference type="FunFam" id="3.40.190.10:FF:000095">
    <property type="entry name" value="Lactotransferrin"/>
    <property type="match status" value="1"/>
</dbReference>
<dbReference type="FunFam" id="3.40.190.10:FF:000105">
    <property type="entry name" value="Serotransferrin"/>
    <property type="match status" value="1"/>
</dbReference>
<dbReference type="Gene3D" id="3.40.190.10">
    <property type="entry name" value="Periplasmic binding protein-like II"/>
    <property type="match status" value="4"/>
</dbReference>
<dbReference type="InterPro" id="IPR016357">
    <property type="entry name" value="Transferrin"/>
</dbReference>
<dbReference type="InterPro" id="IPR001156">
    <property type="entry name" value="Transferrin-like_dom"/>
</dbReference>
<dbReference type="InterPro" id="IPR018195">
    <property type="entry name" value="Transferrin_Fe_BS"/>
</dbReference>
<dbReference type="PANTHER" id="PTHR11485:SF55">
    <property type="entry name" value="LACTOTRANSFERRIN"/>
    <property type="match status" value="1"/>
</dbReference>
<dbReference type="PANTHER" id="PTHR11485">
    <property type="entry name" value="TRANSFERRIN"/>
    <property type="match status" value="1"/>
</dbReference>
<dbReference type="Pfam" id="PF00405">
    <property type="entry name" value="Transferrin"/>
    <property type="match status" value="2"/>
</dbReference>
<dbReference type="PIRSF" id="PIRSF002549">
    <property type="entry name" value="Transferrin"/>
    <property type="match status" value="1"/>
</dbReference>
<dbReference type="PRINTS" id="PR00422">
    <property type="entry name" value="TRANSFERRIN"/>
</dbReference>
<dbReference type="SMART" id="SM00094">
    <property type="entry name" value="TR_FER"/>
    <property type="match status" value="2"/>
</dbReference>
<dbReference type="SUPFAM" id="SSF53850">
    <property type="entry name" value="Periplasmic binding protein-like II"/>
    <property type="match status" value="2"/>
</dbReference>
<dbReference type="PROSITE" id="PS00205">
    <property type="entry name" value="TRANSFERRIN_LIKE_1"/>
    <property type="match status" value="2"/>
</dbReference>
<dbReference type="PROSITE" id="PS00206">
    <property type="entry name" value="TRANSFERRIN_LIKE_2"/>
    <property type="match status" value="2"/>
</dbReference>
<dbReference type="PROSITE" id="PS00207">
    <property type="entry name" value="TRANSFERRIN_LIKE_3"/>
    <property type="match status" value="2"/>
</dbReference>
<dbReference type="PROSITE" id="PS51408">
    <property type="entry name" value="TRANSFERRIN_LIKE_4"/>
    <property type="match status" value="2"/>
</dbReference>
<name>TRFL_CAPHI</name>
<feature type="signal peptide" evidence="1">
    <location>
        <begin position="1"/>
        <end position="19"/>
    </location>
</feature>
<feature type="chain" id="PRO_0000035730" description="Lactotransferrin">
    <location>
        <begin position="20"/>
        <end position="708"/>
    </location>
</feature>
<feature type="domain" description="Transferrin-like 1" evidence="4">
    <location>
        <begin position="25"/>
        <end position="352"/>
    </location>
</feature>
<feature type="domain" description="Transferrin-like 2" evidence="4">
    <location>
        <begin position="364"/>
        <end position="693"/>
    </location>
</feature>
<feature type="active site" evidence="4">
    <location>
        <position position="92"/>
    </location>
</feature>
<feature type="active site" description="Nucleophile" evidence="4">
    <location>
        <position position="278"/>
    </location>
</feature>
<feature type="binding site" evidence="4 5">
    <location>
        <position position="79"/>
    </location>
    <ligand>
        <name>Fe(3+)</name>
        <dbReference type="ChEBI" id="CHEBI:29034"/>
        <label>1</label>
    </ligand>
</feature>
<feature type="binding site" evidence="4 5">
    <location>
        <position position="111"/>
    </location>
    <ligand>
        <name>Fe(3+)</name>
        <dbReference type="ChEBI" id="CHEBI:29034"/>
        <label>1</label>
    </ligand>
</feature>
<feature type="binding site" evidence="4">
    <location>
        <position position="140"/>
    </location>
    <ligand>
        <name>hydrogencarbonate</name>
        <dbReference type="ChEBI" id="CHEBI:17544"/>
        <label>1</label>
    </ligand>
</feature>
<feature type="binding site" evidence="4">
    <location>
        <position position="142"/>
    </location>
    <ligand>
        <name>hydrogencarbonate</name>
        <dbReference type="ChEBI" id="CHEBI:17544"/>
        <label>1</label>
    </ligand>
</feature>
<feature type="binding site" evidence="4">
    <location>
        <position position="143"/>
    </location>
    <ligand>
        <name>hydrogencarbonate</name>
        <dbReference type="ChEBI" id="CHEBI:17544"/>
        <label>1</label>
    </ligand>
</feature>
<feature type="binding site" evidence="4 5">
    <location>
        <position position="211"/>
    </location>
    <ligand>
        <name>Fe(3+)</name>
        <dbReference type="ChEBI" id="CHEBI:29034"/>
        <label>1</label>
    </ligand>
</feature>
<feature type="binding site" evidence="4 5">
    <location>
        <position position="272"/>
    </location>
    <ligand>
        <name>Fe(3+)</name>
        <dbReference type="ChEBI" id="CHEBI:29034"/>
        <label>1</label>
    </ligand>
</feature>
<feature type="binding site" evidence="4 5">
    <location>
        <position position="414"/>
    </location>
    <ligand>
        <name>Fe(3+)</name>
        <dbReference type="ChEBI" id="CHEBI:29034"/>
        <label>2</label>
    </ligand>
</feature>
<feature type="binding site" evidence="4 5">
    <location>
        <position position="452"/>
    </location>
    <ligand>
        <name>Fe(3+)</name>
        <dbReference type="ChEBI" id="CHEBI:29034"/>
        <label>2</label>
    </ligand>
</feature>
<feature type="binding site" evidence="4">
    <location>
        <position position="478"/>
    </location>
    <ligand>
        <name>hydrogencarbonate</name>
        <dbReference type="ChEBI" id="CHEBI:17544"/>
        <label>2</label>
    </ligand>
</feature>
<feature type="binding site" evidence="4">
    <location>
        <position position="482"/>
    </location>
    <ligand>
        <name>hydrogencarbonate</name>
        <dbReference type="ChEBI" id="CHEBI:17544"/>
        <label>2</label>
    </ligand>
</feature>
<feature type="binding site" evidence="4">
    <location>
        <position position="484"/>
    </location>
    <ligand>
        <name>hydrogencarbonate</name>
        <dbReference type="ChEBI" id="CHEBI:17544"/>
        <label>2</label>
    </ligand>
</feature>
<feature type="binding site" evidence="4">
    <location>
        <position position="485"/>
    </location>
    <ligand>
        <name>hydrogencarbonate</name>
        <dbReference type="ChEBI" id="CHEBI:17544"/>
        <label>2</label>
    </ligand>
</feature>
<feature type="binding site" evidence="4 5">
    <location>
        <position position="545"/>
    </location>
    <ligand>
        <name>Fe(3+)</name>
        <dbReference type="ChEBI" id="CHEBI:29034"/>
        <label>2</label>
    </ligand>
</feature>
<feature type="binding site" evidence="4 5">
    <location>
        <position position="614"/>
    </location>
    <ligand>
        <name>Fe(3+)</name>
        <dbReference type="ChEBI" id="CHEBI:29034"/>
        <label>2</label>
    </ligand>
</feature>
<feature type="glycosylation site" description="N-linked (GlcNAc...) (high mannose) asparagine" evidence="6">
    <location>
        <position position="252"/>
    </location>
</feature>
<feature type="glycosylation site" description="N-linked (GlcNAc...) asparagine" evidence="3">
    <location>
        <position position="300"/>
    </location>
</feature>
<feature type="glycosylation site" description="N-linked (GlcNAc...) (complex) asparagine; alternate" evidence="6">
    <location>
        <position position="387"/>
    </location>
</feature>
<feature type="glycosylation site" description="N-linked (GlcNAc...) (high mannose) asparagine; alternate" evidence="6">
    <location>
        <position position="387"/>
    </location>
</feature>
<feature type="glycosylation site" description="N-linked (GlcNAc...) (hybrid) asparagine; alternate" evidence="6">
    <location>
        <position position="387"/>
    </location>
</feature>
<feature type="glycosylation site" description="N-linked (GlcNAc...) (complex) asparagine; alternate" evidence="6">
    <location>
        <position position="495"/>
    </location>
</feature>
<feature type="glycosylation site" description="N-linked (GlcNAc...) (high mannose) asparagine; alternate" evidence="6">
    <location>
        <position position="495"/>
    </location>
</feature>
<feature type="glycosylation site" description="N-linked (GlcNAc...) (hybrid) asparagine; alternate" evidence="6">
    <location>
        <position position="495"/>
    </location>
</feature>
<feature type="glycosylation site" description="N-linked (GlcNAc...) (high mannose) asparagine" evidence="6">
    <location>
        <position position="564"/>
    </location>
</feature>
<feature type="disulfide bond">
    <location>
        <begin position="28"/>
        <end position="64"/>
    </location>
</feature>
<feature type="disulfide bond">
    <location>
        <begin position="38"/>
        <end position="55"/>
    </location>
</feature>
<feature type="disulfide bond">
    <location>
        <begin position="134"/>
        <end position="217"/>
    </location>
</feature>
<feature type="disulfide bond">
    <location>
        <begin position="176"/>
        <end position="192"/>
    </location>
</feature>
<feature type="disulfide bond">
    <location>
        <begin position="179"/>
        <end position="202"/>
    </location>
</feature>
<feature type="disulfide bond">
    <location>
        <begin position="189"/>
        <end position="200"/>
    </location>
</feature>
<feature type="disulfide bond">
    <location>
        <begin position="250"/>
        <end position="264"/>
    </location>
</feature>
<feature type="disulfide bond">
    <location>
        <begin position="367"/>
        <end position="399"/>
    </location>
</feature>
<feature type="disulfide bond">
    <location>
        <begin position="377"/>
        <end position="390"/>
    </location>
</feature>
<feature type="disulfide bond">
    <location>
        <begin position="424"/>
        <end position="703"/>
    </location>
</feature>
<feature type="disulfide bond">
    <location>
        <begin position="444"/>
        <end position="666"/>
    </location>
</feature>
<feature type="disulfide bond">
    <location>
        <begin position="476"/>
        <end position="551"/>
    </location>
</feature>
<feature type="disulfide bond">
    <location>
        <begin position="500"/>
        <end position="694"/>
    </location>
</feature>
<feature type="disulfide bond">
    <location>
        <begin position="510"/>
        <end position="524"/>
    </location>
</feature>
<feature type="disulfide bond">
    <location>
        <begin position="521"/>
        <end position="534"/>
    </location>
</feature>
<feature type="disulfide bond">
    <location>
        <begin position="592"/>
        <end position="606"/>
    </location>
</feature>
<feature type="disulfide bond">
    <location>
        <begin position="644"/>
        <end position="649"/>
    </location>
</feature>
<feature type="sequence conflict" description="In Ref. 1; CAA55517." evidence="8" ref="1">
    <original>I</original>
    <variation>V</variation>
    <location>
        <position position="56"/>
    </location>
</feature>
<feature type="sequence conflict" description="In Ref. 1; CAA55517." evidence="8" ref="1">
    <original>L</original>
    <variation>R</variation>
    <location>
        <position position="88"/>
    </location>
</feature>
<feature type="sequence conflict" description="In Ref. 1; CAA55517." evidence="8" ref="1">
    <original>Q</original>
    <variation>K</variation>
    <location>
        <position position="124"/>
    </location>
</feature>
<feature type="sequence conflict" description="In Ref. 1; CAA55517." evidence="8" ref="1">
    <original>F</original>
    <variation>P</variation>
    <location>
        <position position="154"/>
    </location>
</feature>
<feature type="sequence conflict" description="In Ref. 1; CAA55517." evidence="8" ref="1">
    <original>S</original>
    <variation>R</variation>
    <location>
        <position position="304"/>
    </location>
</feature>
<feature type="sequence conflict" description="In Ref. 1; CAA55517." evidence="8" ref="1">
    <original>D</original>
    <variation>G</variation>
    <location>
        <position position="414"/>
    </location>
</feature>
<gene>
    <name type="primary">LTF</name>
</gene>
<proteinExistence type="evidence at protein level"/>